<feature type="chain" id="PRO_0000146951" description="Histidine decarboxylase">
    <location>
        <begin position="1"/>
        <end position="662"/>
    </location>
</feature>
<feature type="region of interest" description="Disordered" evidence="2">
    <location>
        <begin position="489"/>
        <end position="518"/>
    </location>
</feature>
<feature type="binding site" evidence="1">
    <location>
        <position position="88"/>
    </location>
    <ligand>
        <name>substrate</name>
    </ligand>
</feature>
<feature type="binding site" evidence="1">
    <location>
        <position position="201"/>
    </location>
    <ligand>
        <name>substrate</name>
    </ligand>
</feature>
<feature type="modified residue" description="N6-(pyridoxal phosphate)lysine" evidence="1">
    <location>
        <position position="312"/>
    </location>
</feature>
<feature type="sequence conflict" description="In Ref. 1; CAA40685 and 7; AA sequence." evidence="3" ref="1 7">
    <original>K</original>
    <variation>T</variation>
    <location>
        <position position="177"/>
    </location>
</feature>
<protein>
    <recommendedName>
        <fullName>Histidine decarboxylase</fullName>
        <shortName>HDC</shortName>
        <ecNumber>4.1.1.22</ecNumber>
    </recommendedName>
</protein>
<keyword id="KW-0127">Catecholamine biosynthesis</keyword>
<keyword id="KW-0210">Decarboxylase</keyword>
<keyword id="KW-0903">Direct protein sequencing</keyword>
<keyword id="KW-0456">Lyase</keyword>
<keyword id="KW-0663">Pyridoxal phosphate</keyword>
<keyword id="KW-1185">Reference proteome</keyword>
<organism>
    <name type="scientific">Mus musculus</name>
    <name type="common">Mouse</name>
    <dbReference type="NCBI Taxonomy" id="10090"/>
    <lineage>
        <taxon>Eukaryota</taxon>
        <taxon>Metazoa</taxon>
        <taxon>Chordata</taxon>
        <taxon>Craniata</taxon>
        <taxon>Vertebrata</taxon>
        <taxon>Euteleostomi</taxon>
        <taxon>Mammalia</taxon>
        <taxon>Eutheria</taxon>
        <taxon>Euarchontoglires</taxon>
        <taxon>Glires</taxon>
        <taxon>Rodentia</taxon>
        <taxon>Myomorpha</taxon>
        <taxon>Muroidea</taxon>
        <taxon>Muridae</taxon>
        <taxon>Murinae</taxon>
        <taxon>Mus</taxon>
        <taxon>Mus</taxon>
    </lineage>
</organism>
<sequence>MMEPCEYREYREYYRARGKEMVDYISQYLSTVRERQVTPNVQPGYLRAQLPASAPEEPDSWDSIFGDIERVIMPGVVHWQSPHMHAYYPALTSWPSLLGDMLADAINCLGFTWASSPACTELEMNIMDWLAKMLGLPEYFLHHHPSSRGGGVLQSTVSESTLIALLAARKNKILAMKACEPDANESSLNARLVAYTSDQAHSSVEKAGLISLVKIRFLPVDDNFSLRGEALQKAIEEDKQQGLVPVFVCATLGTTGVCAFDRLSELGPICASEGLWLHVDAAYAGTAFLCPELRGFLEGIEYADSFTFNPSKWMMVHFDCTGFWVKDKYKLQQTFSVNPIYLRHANSGAATDFMHWQIPLSRRFRSIKLWFVIRSFGVKNLQAHVRHGTEMAKYFESLVRSDPSFEIPAKRHLGLVVFRLKGPNCLTESVLKEIAKAGQLFLIPATIQDKLIIRFTVTSQFTTKEDILRDWHLIQEAANLVLSQHCTSQPSPRAKNVIPPPPGTRGLSLESVSEGGDDPAQARKIIKQPGASLARREGGSDLETMPDPFDDCFSEEAPNTTKHKLSSFLFSYLSVQNRRKTTRSLSCNSVPMSAQKSLPADASLKNGGSFRARIFSGFPEQMMMMKKGAFKKLIKFYSVPSFPECSSQCARQLPCCPLEAMV</sequence>
<evidence type="ECO:0000250" key="1"/>
<evidence type="ECO:0000256" key="2">
    <source>
        <dbReference type="SAM" id="MobiDB-lite"/>
    </source>
</evidence>
<evidence type="ECO:0000305" key="3"/>
<gene>
    <name type="primary">Hdc</name>
</gene>
<reference key="1">
    <citation type="journal article" date="1990" name="FEBS Lett.">
        <title>cDNA-derived amino acid sequence of L-histidine decarboxylase from mouse mastocytoma P-815 cells.</title>
        <authorList>
            <person name="Yamamoto J."/>
            <person name="Yatsunami K."/>
            <person name="Ohmori E."/>
            <person name="Sugimoto Y."/>
            <person name="Fukui T."/>
            <person name="Katayama T."/>
            <person name="Ichikawa A."/>
        </authorList>
    </citation>
    <scope>NUCLEOTIDE SEQUENCE [MRNA]</scope>
</reference>
<reference key="2">
    <citation type="submission" date="1998-11" db="EMBL/GenBank/DDBJ databases">
        <authorList>
            <person name="Hasegawa M."/>
            <person name="Foote S."/>
        </authorList>
    </citation>
    <scope>NUCLEOTIDE SEQUENCE [MRNA]</scope>
    <source>
        <strain>C57BL/6J</strain>
        <tissue>Liver</tissue>
    </source>
</reference>
<reference key="3">
    <citation type="journal article" date="2005" name="Science">
        <title>The transcriptional landscape of the mammalian genome.</title>
        <authorList>
            <person name="Carninci P."/>
            <person name="Kasukawa T."/>
            <person name="Katayama S."/>
            <person name="Gough J."/>
            <person name="Frith M.C."/>
            <person name="Maeda N."/>
            <person name="Oyama R."/>
            <person name="Ravasi T."/>
            <person name="Lenhard B."/>
            <person name="Wells C."/>
            <person name="Kodzius R."/>
            <person name="Shimokawa K."/>
            <person name="Bajic V.B."/>
            <person name="Brenner S.E."/>
            <person name="Batalov S."/>
            <person name="Forrest A.R."/>
            <person name="Zavolan M."/>
            <person name="Davis M.J."/>
            <person name="Wilming L.G."/>
            <person name="Aidinis V."/>
            <person name="Allen J.E."/>
            <person name="Ambesi-Impiombato A."/>
            <person name="Apweiler R."/>
            <person name="Aturaliya R.N."/>
            <person name="Bailey T.L."/>
            <person name="Bansal M."/>
            <person name="Baxter L."/>
            <person name="Beisel K.W."/>
            <person name="Bersano T."/>
            <person name="Bono H."/>
            <person name="Chalk A.M."/>
            <person name="Chiu K.P."/>
            <person name="Choudhary V."/>
            <person name="Christoffels A."/>
            <person name="Clutterbuck D.R."/>
            <person name="Crowe M.L."/>
            <person name="Dalla E."/>
            <person name="Dalrymple B.P."/>
            <person name="de Bono B."/>
            <person name="Della Gatta G."/>
            <person name="di Bernardo D."/>
            <person name="Down T."/>
            <person name="Engstrom P."/>
            <person name="Fagiolini M."/>
            <person name="Faulkner G."/>
            <person name="Fletcher C.F."/>
            <person name="Fukushima T."/>
            <person name="Furuno M."/>
            <person name="Futaki S."/>
            <person name="Gariboldi M."/>
            <person name="Georgii-Hemming P."/>
            <person name="Gingeras T.R."/>
            <person name="Gojobori T."/>
            <person name="Green R.E."/>
            <person name="Gustincich S."/>
            <person name="Harbers M."/>
            <person name="Hayashi Y."/>
            <person name="Hensch T.K."/>
            <person name="Hirokawa N."/>
            <person name="Hill D."/>
            <person name="Huminiecki L."/>
            <person name="Iacono M."/>
            <person name="Ikeo K."/>
            <person name="Iwama A."/>
            <person name="Ishikawa T."/>
            <person name="Jakt M."/>
            <person name="Kanapin A."/>
            <person name="Katoh M."/>
            <person name="Kawasawa Y."/>
            <person name="Kelso J."/>
            <person name="Kitamura H."/>
            <person name="Kitano H."/>
            <person name="Kollias G."/>
            <person name="Krishnan S.P."/>
            <person name="Kruger A."/>
            <person name="Kummerfeld S.K."/>
            <person name="Kurochkin I.V."/>
            <person name="Lareau L.F."/>
            <person name="Lazarevic D."/>
            <person name="Lipovich L."/>
            <person name="Liu J."/>
            <person name="Liuni S."/>
            <person name="McWilliam S."/>
            <person name="Madan Babu M."/>
            <person name="Madera M."/>
            <person name="Marchionni L."/>
            <person name="Matsuda H."/>
            <person name="Matsuzawa S."/>
            <person name="Miki H."/>
            <person name="Mignone F."/>
            <person name="Miyake S."/>
            <person name="Morris K."/>
            <person name="Mottagui-Tabar S."/>
            <person name="Mulder N."/>
            <person name="Nakano N."/>
            <person name="Nakauchi H."/>
            <person name="Ng P."/>
            <person name="Nilsson R."/>
            <person name="Nishiguchi S."/>
            <person name="Nishikawa S."/>
            <person name="Nori F."/>
            <person name="Ohara O."/>
            <person name="Okazaki Y."/>
            <person name="Orlando V."/>
            <person name="Pang K.C."/>
            <person name="Pavan W.J."/>
            <person name="Pavesi G."/>
            <person name="Pesole G."/>
            <person name="Petrovsky N."/>
            <person name="Piazza S."/>
            <person name="Reed J."/>
            <person name="Reid J.F."/>
            <person name="Ring B.Z."/>
            <person name="Ringwald M."/>
            <person name="Rost B."/>
            <person name="Ruan Y."/>
            <person name="Salzberg S.L."/>
            <person name="Sandelin A."/>
            <person name="Schneider C."/>
            <person name="Schoenbach C."/>
            <person name="Sekiguchi K."/>
            <person name="Semple C.A."/>
            <person name="Seno S."/>
            <person name="Sessa L."/>
            <person name="Sheng Y."/>
            <person name="Shibata Y."/>
            <person name="Shimada H."/>
            <person name="Shimada K."/>
            <person name="Silva D."/>
            <person name="Sinclair B."/>
            <person name="Sperling S."/>
            <person name="Stupka E."/>
            <person name="Sugiura K."/>
            <person name="Sultana R."/>
            <person name="Takenaka Y."/>
            <person name="Taki K."/>
            <person name="Tammoja K."/>
            <person name="Tan S.L."/>
            <person name="Tang S."/>
            <person name="Taylor M.S."/>
            <person name="Tegner J."/>
            <person name="Teichmann S.A."/>
            <person name="Ueda H.R."/>
            <person name="van Nimwegen E."/>
            <person name="Verardo R."/>
            <person name="Wei C.L."/>
            <person name="Yagi K."/>
            <person name="Yamanishi H."/>
            <person name="Zabarovsky E."/>
            <person name="Zhu S."/>
            <person name="Zimmer A."/>
            <person name="Hide W."/>
            <person name="Bult C."/>
            <person name="Grimmond S.M."/>
            <person name="Teasdale R.D."/>
            <person name="Liu E.T."/>
            <person name="Brusic V."/>
            <person name="Quackenbush J."/>
            <person name="Wahlestedt C."/>
            <person name="Mattick J.S."/>
            <person name="Hume D.A."/>
            <person name="Kai C."/>
            <person name="Sasaki D."/>
            <person name="Tomaru Y."/>
            <person name="Fukuda S."/>
            <person name="Kanamori-Katayama M."/>
            <person name="Suzuki M."/>
            <person name="Aoki J."/>
            <person name="Arakawa T."/>
            <person name="Iida J."/>
            <person name="Imamura K."/>
            <person name="Itoh M."/>
            <person name="Kato T."/>
            <person name="Kawaji H."/>
            <person name="Kawagashira N."/>
            <person name="Kawashima T."/>
            <person name="Kojima M."/>
            <person name="Kondo S."/>
            <person name="Konno H."/>
            <person name="Nakano K."/>
            <person name="Ninomiya N."/>
            <person name="Nishio T."/>
            <person name="Okada M."/>
            <person name="Plessy C."/>
            <person name="Shibata K."/>
            <person name="Shiraki T."/>
            <person name="Suzuki S."/>
            <person name="Tagami M."/>
            <person name="Waki K."/>
            <person name="Watahiki A."/>
            <person name="Okamura-Oho Y."/>
            <person name="Suzuki H."/>
            <person name="Kawai J."/>
            <person name="Hayashizaki Y."/>
        </authorList>
    </citation>
    <scope>NUCLEOTIDE SEQUENCE [LARGE SCALE MRNA]</scope>
    <source>
        <strain>C57BL/6J</strain>
        <strain>NOD</strain>
        <tissue>Bone marrow</tissue>
        <tissue>Testis</tissue>
        <tissue>Thymus</tissue>
    </source>
</reference>
<reference key="4">
    <citation type="journal article" date="2009" name="PLoS Biol.">
        <title>Lineage-specific biology revealed by a finished genome assembly of the mouse.</title>
        <authorList>
            <person name="Church D.M."/>
            <person name="Goodstadt L."/>
            <person name="Hillier L.W."/>
            <person name="Zody M.C."/>
            <person name="Goldstein S."/>
            <person name="She X."/>
            <person name="Bult C.J."/>
            <person name="Agarwala R."/>
            <person name="Cherry J.L."/>
            <person name="DiCuccio M."/>
            <person name="Hlavina W."/>
            <person name="Kapustin Y."/>
            <person name="Meric P."/>
            <person name="Maglott D."/>
            <person name="Birtle Z."/>
            <person name="Marques A.C."/>
            <person name="Graves T."/>
            <person name="Zhou S."/>
            <person name="Teague B."/>
            <person name="Potamousis K."/>
            <person name="Churas C."/>
            <person name="Place M."/>
            <person name="Herschleb J."/>
            <person name="Runnheim R."/>
            <person name="Forrest D."/>
            <person name="Amos-Landgraf J."/>
            <person name="Schwartz D.C."/>
            <person name="Cheng Z."/>
            <person name="Lindblad-Toh K."/>
            <person name="Eichler E.E."/>
            <person name="Ponting C.P."/>
        </authorList>
    </citation>
    <scope>NUCLEOTIDE SEQUENCE [LARGE SCALE GENOMIC DNA]</scope>
    <source>
        <strain>C57BL/6J</strain>
    </source>
</reference>
<reference key="5">
    <citation type="submission" date="2005-07" db="EMBL/GenBank/DDBJ databases">
        <authorList>
            <person name="Mural R.J."/>
            <person name="Adams M.D."/>
            <person name="Myers E.W."/>
            <person name="Smith H.O."/>
            <person name="Venter J.C."/>
        </authorList>
    </citation>
    <scope>NUCLEOTIDE SEQUENCE [LARGE SCALE GENOMIC DNA]</scope>
</reference>
<reference key="6">
    <citation type="journal article" date="1993" name="Biochem. Biophys. Res. Commun.">
        <title>Enhanced expression of the mouse L-histidine decarboxylase gene with a combination of dexamethasone and 12-O-tetradecanoylphorbol-13-acetate.</title>
        <authorList>
            <person name="Ohgoh M."/>
            <person name="Yamamoto J."/>
            <person name="Kawata M."/>
            <person name="Yamamura I."/>
            <person name="Fukui T."/>
            <person name="Ichikawa A."/>
        </authorList>
    </citation>
    <scope>NUCLEOTIDE SEQUENCE [GENOMIC DNA] OF 1-17</scope>
</reference>
<reference key="7">
    <citation type="journal article" date="1993" name="Biochim. Biophys. Acta">
        <title>Expression and characterization of recombinant mouse mastocytoma histidine decarboxylase.</title>
        <authorList>
            <person name="Yamamoto J."/>
            <person name="Fukui T."/>
            <person name="Suzuki K."/>
            <person name="Tanaka S."/>
            <person name="Yatsunami K."/>
            <person name="Ichikawa A."/>
        </authorList>
    </citation>
    <scope>PROTEIN SEQUENCE OF 173-186; 207-212; 378-406; 437-449 AND 495-512</scope>
    <source>
        <tissue>Mast cell</tissue>
    </source>
</reference>
<dbReference type="EC" id="4.1.1.22"/>
<dbReference type="EMBL" id="X57437">
    <property type="protein sequence ID" value="CAA40685.1"/>
    <property type="molecule type" value="mRNA"/>
</dbReference>
<dbReference type="EMBL" id="AF109137">
    <property type="protein sequence ID" value="AAC95389.1"/>
    <property type="molecule type" value="mRNA"/>
</dbReference>
<dbReference type="EMBL" id="AK088545">
    <property type="protein sequence ID" value="BAC40415.1"/>
    <property type="molecule type" value="mRNA"/>
</dbReference>
<dbReference type="EMBL" id="AK133455">
    <property type="protein sequence ID" value="BAE21666.1"/>
    <property type="molecule type" value="mRNA"/>
</dbReference>
<dbReference type="EMBL" id="AK150168">
    <property type="protein sequence ID" value="BAE29356.1"/>
    <property type="molecule type" value="mRNA"/>
</dbReference>
<dbReference type="EMBL" id="AK153104">
    <property type="protein sequence ID" value="BAE31724.1"/>
    <property type="molecule type" value="mRNA"/>
</dbReference>
<dbReference type="EMBL" id="AL844555">
    <property type="status" value="NOT_ANNOTATED_CDS"/>
    <property type="molecule type" value="Genomic_DNA"/>
</dbReference>
<dbReference type="EMBL" id="CH466519">
    <property type="protein sequence ID" value="EDL28158.1"/>
    <property type="molecule type" value="Genomic_DNA"/>
</dbReference>
<dbReference type="EMBL" id="S67000">
    <property type="protein sequence ID" value="AAB29093.1"/>
    <property type="molecule type" value="Genomic_DNA"/>
</dbReference>
<dbReference type="CCDS" id="CCDS16684.1"/>
<dbReference type="PIR" id="S12989">
    <property type="entry name" value="S12989"/>
</dbReference>
<dbReference type="RefSeq" id="NP_032256.3">
    <property type="nucleotide sequence ID" value="NM_008230.6"/>
</dbReference>
<dbReference type="SMR" id="P23738"/>
<dbReference type="BioGRID" id="200264">
    <property type="interactions" value="1"/>
</dbReference>
<dbReference type="FunCoup" id="P23738">
    <property type="interactions" value="75"/>
</dbReference>
<dbReference type="STRING" id="10090.ENSMUSP00000028838"/>
<dbReference type="PhosphoSitePlus" id="P23738"/>
<dbReference type="PaxDb" id="10090-ENSMUSP00000028838"/>
<dbReference type="ProteomicsDB" id="279837"/>
<dbReference type="Antibodypedia" id="42596">
    <property type="antibodies" value="279 antibodies from 33 providers"/>
</dbReference>
<dbReference type="DNASU" id="15186"/>
<dbReference type="Ensembl" id="ENSMUST00000028838.5">
    <property type="protein sequence ID" value="ENSMUSP00000028838.5"/>
    <property type="gene ID" value="ENSMUSG00000027360.6"/>
</dbReference>
<dbReference type="GeneID" id="15186"/>
<dbReference type="KEGG" id="mmu:15186"/>
<dbReference type="UCSC" id="uc008mdr.2">
    <property type="organism name" value="mouse"/>
</dbReference>
<dbReference type="AGR" id="MGI:96062"/>
<dbReference type="CTD" id="3067"/>
<dbReference type="MGI" id="MGI:96062">
    <property type="gene designation" value="Hdc"/>
</dbReference>
<dbReference type="VEuPathDB" id="HostDB:ENSMUSG00000027360"/>
<dbReference type="eggNOG" id="KOG0628">
    <property type="taxonomic scope" value="Eukaryota"/>
</dbReference>
<dbReference type="GeneTree" id="ENSGT00940000157938"/>
<dbReference type="HOGENOM" id="CLU_011856_3_0_1"/>
<dbReference type="InParanoid" id="P23738"/>
<dbReference type="OMA" id="ERDPSHY"/>
<dbReference type="OrthoDB" id="639767at2759"/>
<dbReference type="PhylomeDB" id="P23738"/>
<dbReference type="TreeFam" id="TF313863"/>
<dbReference type="BRENDA" id="4.1.1.22">
    <property type="organism ID" value="3474"/>
</dbReference>
<dbReference type="Reactome" id="R-MMU-70921">
    <property type="pathway name" value="Histidine catabolism"/>
</dbReference>
<dbReference type="SABIO-RK" id="P23738"/>
<dbReference type="UniPathway" id="UPA00822">
    <property type="reaction ID" value="UER00786"/>
</dbReference>
<dbReference type="BioGRID-ORCS" id="15186">
    <property type="hits" value="1 hit in 78 CRISPR screens"/>
</dbReference>
<dbReference type="ChiTaRS" id="Hdc">
    <property type="organism name" value="mouse"/>
</dbReference>
<dbReference type="PRO" id="PR:P23738"/>
<dbReference type="Proteomes" id="UP000000589">
    <property type="component" value="Chromosome 2"/>
</dbReference>
<dbReference type="RNAct" id="P23738">
    <property type="molecule type" value="protein"/>
</dbReference>
<dbReference type="Bgee" id="ENSMUSG00000027360">
    <property type="expression patterns" value="Expressed in granulocyte and 149 other cell types or tissues"/>
</dbReference>
<dbReference type="GO" id="GO:0004398">
    <property type="term" value="F:histidine decarboxylase activity"/>
    <property type="evidence" value="ECO:0000315"/>
    <property type="project" value="MGI"/>
</dbReference>
<dbReference type="GO" id="GO:0030170">
    <property type="term" value="F:pyridoxal phosphate binding"/>
    <property type="evidence" value="ECO:0007669"/>
    <property type="project" value="InterPro"/>
</dbReference>
<dbReference type="GO" id="GO:0042423">
    <property type="term" value="P:catecholamine biosynthetic process"/>
    <property type="evidence" value="ECO:0007669"/>
    <property type="project" value="UniProtKB-KW"/>
</dbReference>
<dbReference type="GO" id="GO:0001694">
    <property type="term" value="P:histamine biosynthetic process"/>
    <property type="evidence" value="ECO:0000315"/>
    <property type="project" value="MGI"/>
</dbReference>
<dbReference type="GO" id="GO:0006548">
    <property type="term" value="P:L-histidine catabolic process"/>
    <property type="evidence" value="ECO:0000315"/>
    <property type="project" value="MGI"/>
</dbReference>
<dbReference type="CDD" id="cd06450">
    <property type="entry name" value="DOPA_deC_like"/>
    <property type="match status" value="1"/>
</dbReference>
<dbReference type="FunFam" id="1.20.1340.10:FF:000001">
    <property type="entry name" value="Histidine decarboxylase"/>
    <property type="match status" value="1"/>
</dbReference>
<dbReference type="FunFam" id="3.40.640.10:FF:000025">
    <property type="entry name" value="Histidine decarboxylase"/>
    <property type="match status" value="1"/>
</dbReference>
<dbReference type="FunFam" id="3.90.1150.10:FF:000018">
    <property type="entry name" value="Histidine decarboxylase"/>
    <property type="match status" value="1"/>
</dbReference>
<dbReference type="Gene3D" id="3.90.1150.10">
    <property type="entry name" value="Aspartate Aminotransferase, domain 1"/>
    <property type="match status" value="1"/>
</dbReference>
<dbReference type="Gene3D" id="1.20.1340.10">
    <property type="entry name" value="dopa decarboxylase, N-terminal domain"/>
    <property type="match status" value="1"/>
</dbReference>
<dbReference type="Gene3D" id="3.40.640.10">
    <property type="entry name" value="Type I PLP-dependent aspartate aminotransferase-like (Major domain)"/>
    <property type="match status" value="1"/>
</dbReference>
<dbReference type="InterPro" id="IPR010977">
    <property type="entry name" value="Aromatic_deC"/>
</dbReference>
<dbReference type="InterPro" id="IPR002129">
    <property type="entry name" value="PyrdxlP-dep_de-COase"/>
</dbReference>
<dbReference type="InterPro" id="IPR015424">
    <property type="entry name" value="PyrdxlP-dep_Trfase"/>
</dbReference>
<dbReference type="InterPro" id="IPR015421">
    <property type="entry name" value="PyrdxlP-dep_Trfase_major"/>
</dbReference>
<dbReference type="InterPro" id="IPR015422">
    <property type="entry name" value="PyrdxlP-dep_Trfase_small"/>
</dbReference>
<dbReference type="InterPro" id="IPR021115">
    <property type="entry name" value="Pyridoxal-P_BS"/>
</dbReference>
<dbReference type="PANTHER" id="PTHR11999">
    <property type="entry name" value="GROUP II PYRIDOXAL-5-PHOSPHATE DECARBOXYLASE"/>
    <property type="match status" value="1"/>
</dbReference>
<dbReference type="PANTHER" id="PTHR11999:SF68">
    <property type="entry name" value="HISTIDINE DECARBOXYLASE"/>
    <property type="match status" value="1"/>
</dbReference>
<dbReference type="Pfam" id="PF00282">
    <property type="entry name" value="Pyridoxal_deC"/>
    <property type="match status" value="1"/>
</dbReference>
<dbReference type="PRINTS" id="PR00800">
    <property type="entry name" value="YHDCRBOXLASE"/>
</dbReference>
<dbReference type="SUPFAM" id="SSF53383">
    <property type="entry name" value="PLP-dependent transferases"/>
    <property type="match status" value="1"/>
</dbReference>
<dbReference type="PROSITE" id="PS00392">
    <property type="entry name" value="DDC_GAD_HDC_YDC"/>
    <property type="match status" value="1"/>
</dbReference>
<accession>P23738</accession>
<accession>Q9QWU3</accession>
<comment type="function">
    <text evidence="1">Catalyzes the biosynthesis of histamine from histidine.</text>
</comment>
<comment type="catalytic activity">
    <reaction>
        <text>L-histidine + H(+) = histamine + CO2</text>
        <dbReference type="Rhea" id="RHEA:20840"/>
        <dbReference type="ChEBI" id="CHEBI:15378"/>
        <dbReference type="ChEBI" id="CHEBI:16526"/>
        <dbReference type="ChEBI" id="CHEBI:57595"/>
        <dbReference type="ChEBI" id="CHEBI:58432"/>
        <dbReference type="EC" id="4.1.1.22"/>
    </reaction>
</comment>
<comment type="cofactor">
    <cofactor>
        <name>pyridoxal 5'-phosphate</name>
        <dbReference type="ChEBI" id="CHEBI:597326"/>
    </cofactor>
</comment>
<comment type="pathway">
    <text>Amine and polyamine biosynthesis; histamine biosynthesis; histamine from L-histidine: step 1/1.</text>
</comment>
<comment type="subunit">
    <text>Homodimer.</text>
</comment>
<comment type="similarity">
    <text evidence="3">Belongs to the group II decarboxylase family.</text>
</comment>
<name>DCHS_MOUSE</name>
<proteinExistence type="evidence at protein level"/>